<organism>
    <name type="scientific">Drosophila yakuba</name>
    <name type="common">Fruit fly</name>
    <dbReference type="NCBI Taxonomy" id="7245"/>
    <lineage>
        <taxon>Eukaryota</taxon>
        <taxon>Metazoa</taxon>
        <taxon>Ecdysozoa</taxon>
        <taxon>Arthropoda</taxon>
        <taxon>Hexapoda</taxon>
        <taxon>Insecta</taxon>
        <taxon>Pterygota</taxon>
        <taxon>Neoptera</taxon>
        <taxon>Endopterygota</taxon>
        <taxon>Diptera</taxon>
        <taxon>Brachycera</taxon>
        <taxon>Muscomorpha</taxon>
        <taxon>Ephydroidea</taxon>
        <taxon>Drosophilidae</taxon>
        <taxon>Drosophila</taxon>
        <taxon>Sophophora</taxon>
    </lineage>
</organism>
<keyword id="KW-0963">Cytoplasm</keyword>
<keyword id="KW-0206">Cytoskeleton</keyword>
<keyword id="KW-0493">Microtubule</keyword>
<keyword id="KW-0539">Nucleus</keyword>
<keyword id="KW-0597">Phosphoprotein</keyword>
<name>JUPIT_DROYA</name>
<feature type="chain" id="PRO_0000355135" description="Microtubule-associated protein Jupiter">
    <location>
        <begin position="1"/>
        <end position="347"/>
    </location>
</feature>
<feature type="region of interest" description="Disordered" evidence="2">
    <location>
        <begin position="1"/>
        <end position="33"/>
    </location>
</feature>
<feature type="region of interest" description="Disordered" evidence="2">
    <location>
        <begin position="127"/>
        <end position="193"/>
    </location>
</feature>
<feature type="region of interest" description="Disordered" evidence="2">
    <location>
        <begin position="303"/>
        <end position="347"/>
    </location>
</feature>
<feature type="compositionally biased region" description="Polar residues" evidence="2">
    <location>
        <begin position="1"/>
        <end position="14"/>
    </location>
</feature>
<feature type="compositionally biased region" description="Low complexity" evidence="2">
    <location>
        <begin position="132"/>
        <end position="145"/>
    </location>
</feature>
<feature type="compositionally biased region" description="Polar residues" evidence="2">
    <location>
        <begin position="146"/>
        <end position="164"/>
    </location>
</feature>
<feature type="compositionally biased region" description="Pro residues" evidence="2">
    <location>
        <begin position="181"/>
        <end position="193"/>
    </location>
</feature>
<feature type="modified residue" description="Phosphoserine" evidence="1">
    <location>
        <position position="24"/>
    </location>
</feature>
<feature type="modified residue" description="Phosphothreonine" evidence="1">
    <location>
        <position position="35"/>
    </location>
</feature>
<feature type="modified residue" description="Phosphothreonine" evidence="1">
    <location>
        <position position="96"/>
    </location>
</feature>
<feature type="modified residue" description="Phosphoserine" evidence="1">
    <location>
        <position position="105"/>
    </location>
</feature>
<feature type="modified residue" description="Phosphoserine" evidence="1">
    <location>
        <position position="134"/>
    </location>
</feature>
<feature type="modified residue" description="Phosphoserine" evidence="1">
    <location>
        <position position="145"/>
    </location>
</feature>
<reference evidence="4" key="1">
    <citation type="journal article" date="2007" name="Nature">
        <title>Evolution of genes and genomes on the Drosophila phylogeny.</title>
        <authorList>
            <consortium name="Drosophila 12 genomes consortium"/>
        </authorList>
    </citation>
    <scope>NUCLEOTIDE SEQUENCE [LARGE SCALE GENOMIC DNA]</scope>
    <source>
        <strain evidence="4">Tai18E2 / Tucson 14021-0261.01</strain>
    </source>
</reference>
<proteinExistence type="inferred from homology"/>
<dbReference type="EMBL" id="CM000160">
    <property type="protein sequence ID" value="EDW97694.1"/>
    <property type="molecule type" value="Genomic_DNA"/>
</dbReference>
<dbReference type="RefSeq" id="XP_002097982.2">
    <property type="nucleotide sequence ID" value="XM_002097946.2"/>
</dbReference>
<dbReference type="EnsemblMetazoa" id="FBtr0394071">
    <property type="protein sequence ID" value="FBpp0353416"/>
    <property type="gene ID" value="FBgn0227987"/>
</dbReference>
<dbReference type="EnsemblMetazoa" id="FBtr0405694">
    <property type="protein sequence ID" value="FBpp0364315"/>
    <property type="gene ID" value="FBgn0227987"/>
</dbReference>
<dbReference type="KEGG" id="dya:Dyak_GE10105"/>
<dbReference type="eggNOG" id="ENOG502S7TC">
    <property type="taxonomic scope" value="Eukaryota"/>
</dbReference>
<dbReference type="HOGENOM" id="CLU_076719_0_0_1"/>
<dbReference type="OMA" id="GANDFHQ"/>
<dbReference type="OrthoDB" id="6367565at2759"/>
<dbReference type="PhylomeDB" id="B4PU44"/>
<dbReference type="ChiTaRS" id="Jupiter">
    <property type="organism name" value="fly"/>
</dbReference>
<dbReference type="Proteomes" id="UP000002282">
    <property type="component" value="Chromosome 3R"/>
</dbReference>
<dbReference type="GO" id="GO:0005829">
    <property type="term" value="C:cytosol"/>
    <property type="evidence" value="ECO:0000250"/>
    <property type="project" value="UniProtKB"/>
</dbReference>
<dbReference type="GO" id="GO:0005874">
    <property type="term" value="C:microtubule"/>
    <property type="evidence" value="ECO:0007669"/>
    <property type="project" value="UniProtKB-KW"/>
</dbReference>
<dbReference type="GO" id="GO:0005875">
    <property type="term" value="C:microtubule associated complex"/>
    <property type="evidence" value="ECO:0000250"/>
    <property type="project" value="UniProtKB"/>
</dbReference>
<dbReference type="GO" id="GO:0005634">
    <property type="term" value="C:nucleus"/>
    <property type="evidence" value="ECO:0000250"/>
    <property type="project" value="UniProtKB"/>
</dbReference>
<dbReference type="GO" id="GO:0005819">
    <property type="term" value="C:spindle"/>
    <property type="evidence" value="ECO:0007669"/>
    <property type="project" value="UniProtKB-SubCell"/>
</dbReference>
<dbReference type="GO" id="GO:0008017">
    <property type="term" value="F:microtubule binding"/>
    <property type="evidence" value="ECO:0000250"/>
    <property type="project" value="UniProtKB"/>
</dbReference>
<dbReference type="GO" id="GO:0005200">
    <property type="term" value="F:structural constituent of cytoskeleton"/>
    <property type="evidence" value="ECO:0000250"/>
    <property type="project" value="UniProtKB"/>
</dbReference>
<dbReference type="GO" id="GO:0031116">
    <property type="term" value="P:positive regulation of microtubule polymerization"/>
    <property type="evidence" value="ECO:0000250"/>
    <property type="project" value="UniProtKB"/>
</dbReference>
<dbReference type="InterPro" id="IPR033335">
    <property type="entry name" value="JUPITER"/>
</dbReference>
<dbReference type="PANTHER" id="PTHR34930">
    <property type="entry name" value="GEO05313P1"/>
    <property type="match status" value="1"/>
</dbReference>
<dbReference type="PANTHER" id="PTHR34930:SF2">
    <property type="entry name" value="MICROTUBULE-ASSOCIATED PROTEIN JUPITER"/>
    <property type="match status" value="1"/>
</dbReference>
<dbReference type="Pfam" id="PF17054">
    <property type="entry name" value="JUPITER"/>
    <property type="match status" value="1"/>
</dbReference>
<accession>B4PU44</accession>
<comment type="function">
    <text evidence="1">Binds to all microtubule populations.</text>
</comment>
<comment type="subcellular location">
    <subcellularLocation>
        <location evidence="1">Nucleus</location>
    </subcellularLocation>
    <subcellularLocation>
        <location evidence="1">Cytoplasm</location>
    </subcellularLocation>
    <subcellularLocation>
        <location evidence="1">Cytoplasm</location>
        <location evidence="1">Cytoskeleton</location>
    </subcellularLocation>
    <subcellularLocation>
        <location evidence="1">Cytoplasm</location>
        <location evidence="1">Cytoskeleton</location>
        <location evidence="1">Spindle</location>
    </subcellularLocation>
</comment>
<comment type="similarity">
    <text evidence="3">Belongs to the MAP Jupiter family.</text>
</comment>
<sequence length="347" mass="36914">MISNFDCTDNQASSKVLRPPGGGSSDIFGSEMPQTPRNVKNRMASNIFAAEKDNGVKNNVRQGAHRFYFIGDAPRRGQKTVDSHNRLFGEPARPITPGKNHMKSSIPFGQNTEAVASAQKLLTTNGHYNGKSGSVSSASSSVSSSTENLKMNSGSRSVFRNMSTAAGPDTKETSQRESLCPPSPVPIEVPTPPADSLPIDNSCRDSEVGDVPADNSTYTKSDQVNEACQTRRDSGNNPELPYSLDQMAGVANVKEPLGLCPNEVKEDAQACSKLDSRNPITGLGLNGDGVGGLKPKKLKIREGNPVTGEGYKAGGNDFHHRQESNNGGTPVINKNRIPPGGYSSGLW</sequence>
<protein>
    <recommendedName>
        <fullName evidence="1">Microtubule-associated protein Jupiter</fullName>
    </recommendedName>
</protein>
<evidence type="ECO:0000250" key="1">
    <source>
        <dbReference type="UniProtKB" id="Q9I7K0"/>
    </source>
</evidence>
<evidence type="ECO:0000256" key="2">
    <source>
        <dbReference type="SAM" id="MobiDB-lite"/>
    </source>
</evidence>
<evidence type="ECO:0000305" key="3"/>
<evidence type="ECO:0000312" key="4">
    <source>
        <dbReference type="EMBL" id="EDW97694.1"/>
    </source>
</evidence>
<gene>
    <name evidence="1" type="primary">Jupiter</name>
    <name type="ORF">GE10105</name>
</gene>